<dbReference type="EC" id="2.3.3.16"/>
<dbReference type="EMBL" id="AL123456">
    <property type="protein sequence ID" value="CCP43637.1"/>
    <property type="molecule type" value="Genomic_DNA"/>
</dbReference>
<dbReference type="PIR" id="F70781">
    <property type="entry name" value="F70781"/>
</dbReference>
<dbReference type="RefSeq" id="NP_215404.1">
    <property type="nucleotide sequence ID" value="NC_000962.3"/>
</dbReference>
<dbReference type="RefSeq" id="WP_003898633.1">
    <property type="nucleotide sequence ID" value="NZ_NVQJ01000001.1"/>
</dbReference>
<dbReference type="PDB" id="8GI7">
    <property type="method" value="X-ray"/>
    <property type="resolution" value="3.30 A"/>
    <property type="chains" value="A/B/C/D=1-373"/>
</dbReference>
<dbReference type="PDB" id="8GIW">
    <property type="method" value="X-ray"/>
    <property type="resolution" value="3.15 A"/>
    <property type="chains" value="A/B/C/D=1-373"/>
</dbReference>
<dbReference type="PDB" id="8GLB">
    <property type="method" value="X-ray"/>
    <property type="resolution" value="2.10 A"/>
    <property type="chains" value="A/B/C/D=1-373"/>
</dbReference>
<dbReference type="PDB" id="8GLL">
    <property type="method" value="X-ray"/>
    <property type="resolution" value="2.65 A"/>
    <property type="chains" value="A/B/C/D/E/F/G/H=1-373"/>
</dbReference>
<dbReference type="PDB" id="8GM9">
    <property type="method" value="X-ray"/>
    <property type="resolution" value="2.40 A"/>
    <property type="chains" value="A/B/C/D=1-373"/>
</dbReference>
<dbReference type="PDB" id="8GMF">
    <property type="method" value="X-ray"/>
    <property type="resolution" value="2.96 A"/>
    <property type="chains" value="A/B/C/D/E/F/G/H=1-373"/>
</dbReference>
<dbReference type="PDB" id="8GMI">
    <property type="method" value="X-ray"/>
    <property type="resolution" value="2.70 A"/>
    <property type="chains" value="A/B/C/D/E/F/G/H=1-373"/>
</dbReference>
<dbReference type="PDB" id="8GMK">
    <property type="method" value="X-ray"/>
    <property type="resolution" value="1.81 A"/>
    <property type="chains" value="A/B=1-373"/>
</dbReference>
<dbReference type="PDB" id="8S97">
    <property type="method" value="X-ray"/>
    <property type="resolution" value="2.70 A"/>
    <property type="chains" value="A=1-373"/>
</dbReference>
<dbReference type="PDB" id="8S9D">
    <property type="method" value="X-ray"/>
    <property type="resolution" value="2.57 A"/>
    <property type="chains" value="A=1-373"/>
</dbReference>
<dbReference type="PDBsum" id="8GI7"/>
<dbReference type="PDBsum" id="8GIW"/>
<dbReference type="PDBsum" id="8GLB"/>
<dbReference type="PDBsum" id="8GLL"/>
<dbReference type="PDBsum" id="8GM9"/>
<dbReference type="PDBsum" id="8GMF"/>
<dbReference type="PDBsum" id="8GMI"/>
<dbReference type="PDBsum" id="8GMK"/>
<dbReference type="PDBsum" id="8S97"/>
<dbReference type="PDBsum" id="8S9D"/>
<dbReference type="SMR" id="P9WPD3"/>
<dbReference type="FunCoup" id="P9WPD3">
    <property type="interactions" value="179"/>
</dbReference>
<dbReference type="STRING" id="83332.Rv0889c"/>
<dbReference type="BindingDB" id="P9WPD3"/>
<dbReference type="ChEMBL" id="CHEMBL5291952"/>
<dbReference type="iPTMnet" id="P9WPD3"/>
<dbReference type="PaxDb" id="83332-Rv0889c"/>
<dbReference type="DNASU" id="885466"/>
<dbReference type="GeneID" id="885466"/>
<dbReference type="KEGG" id="mtu:Rv0889c"/>
<dbReference type="KEGG" id="mtv:RVBD_0889c"/>
<dbReference type="TubercuList" id="Rv0889c"/>
<dbReference type="eggNOG" id="COG0372">
    <property type="taxonomic scope" value="Bacteria"/>
</dbReference>
<dbReference type="InParanoid" id="P9WPD3"/>
<dbReference type="OrthoDB" id="9800864at2"/>
<dbReference type="PhylomeDB" id="P9WPD3"/>
<dbReference type="UniPathway" id="UPA00223">
    <property type="reaction ID" value="UER00717"/>
</dbReference>
<dbReference type="Proteomes" id="UP000001584">
    <property type="component" value="Chromosome"/>
</dbReference>
<dbReference type="GO" id="GO:0005829">
    <property type="term" value="C:cytosol"/>
    <property type="evidence" value="ECO:0007005"/>
    <property type="project" value="MTBBASE"/>
</dbReference>
<dbReference type="GO" id="GO:0004108">
    <property type="term" value="F:citrate (Si)-synthase activity"/>
    <property type="evidence" value="ECO:0000318"/>
    <property type="project" value="GO_Central"/>
</dbReference>
<dbReference type="GO" id="GO:0005975">
    <property type="term" value="P:carbohydrate metabolic process"/>
    <property type="evidence" value="ECO:0000318"/>
    <property type="project" value="GO_Central"/>
</dbReference>
<dbReference type="GO" id="GO:0006099">
    <property type="term" value="P:tricarboxylic acid cycle"/>
    <property type="evidence" value="ECO:0000318"/>
    <property type="project" value="GO_Central"/>
</dbReference>
<dbReference type="CDD" id="cd06109">
    <property type="entry name" value="BsCS-I_like"/>
    <property type="match status" value="1"/>
</dbReference>
<dbReference type="FunFam" id="1.10.230.10:FF:000006">
    <property type="entry name" value="Citrate synthase 2"/>
    <property type="match status" value="1"/>
</dbReference>
<dbReference type="FunFam" id="1.10.580.10:FF:000007">
    <property type="entry name" value="Citrate synthase 2"/>
    <property type="match status" value="1"/>
</dbReference>
<dbReference type="Gene3D" id="1.10.580.10">
    <property type="entry name" value="Citrate Synthase, domain 1"/>
    <property type="match status" value="2"/>
</dbReference>
<dbReference type="Gene3D" id="1.10.230.10">
    <property type="entry name" value="Cytochrome P450-Terp, domain 2"/>
    <property type="match status" value="1"/>
</dbReference>
<dbReference type="InterPro" id="IPR016142">
    <property type="entry name" value="Citrate_synth-like_lrg_a-sub"/>
</dbReference>
<dbReference type="InterPro" id="IPR016143">
    <property type="entry name" value="Citrate_synth-like_sm_a-sub"/>
</dbReference>
<dbReference type="InterPro" id="IPR002020">
    <property type="entry name" value="Citrate_synthase"/>
</dbReference>
<dbReference type="InterPro" id="IPR019810">
    <property type="entry name" value="Citrate_synthase_AS"/>
</dbReference>
<dbReference type="InterPro" id="IPR036969">
    <property type="entry name" value="Citrate_synthase_sf"/>
</dbReference>
<dbReference type="NCBIfam" id="NF009005">
    <property type="entry name" value="PRK12350.1"/>
    <property type="match status" value="1"/>
</dbReference>
<dbReference type="PANTHER" id="PTHR11739">
    <property type="entry name" value="CITRATE SYNTHASE"/>
    <property type="match status" value="1"/>
</dbReference>
<dbReference type="PANTHER" id="PTHR11739:SF23">
    <property type="entry name" value="CITRATE SYNTHASE 2-RELATED"/>
    <property type="match status" value="1"/>
</dbReference>
<dbReference type="Pfam" id="PF00285">
    <property type="entry name" value="Citrate_synt"/>
    <property type="match status" value="2"/>
</dbReference>
<dbReference type="PRINTS" id="PR00143">
    <property type="entry name" value="CITRTSNTHASE"/>
</dbReference>
<dbReference type="SUPFAM" id="SSF48256">
    <property type="entry name" value="Citrate synthase"/>
    <property type="match status" value="1"/>
</dbReference>
<dbReference type="PROSITE" id="PS00480">
    <property type="entry name" value="CITRATE_SYNTHASE"/>
    <property type="match status" value="1"/>
</dbReference>
<sequence>MTVVPENFVPGLDGVVAFTTEIAEPDKDGGALRYRGVDIEDLVSQRVTFGDVWALLVDGNFGSGLPPAEPFPLPIHSGDVRVDVQAGLAMLAPIWGYAPLLDIDDATARQQLARASVMALSYVAQSARGIYQPAVPQRIIDECSTVTARFMTRWQGEPDPRHIEAIDAYWVSAAEHGMNASTFTARVIASTGADVAAALSGAIGAMSGPLHGGAPARVLPMLDEVERAGDARSVVKGILDRGEKLMGFGHRVYRAEDPRARVLRAAAERLGAPRYEVAVAVEQAALSELRERRPDRAIETNVEFWAAVVLDFARVPANMMPAMFTCGRTAGWCAHILEQKRLGKLVRPSAIYVGPGPRSPESVDGWERVLTTA</sequence>
<proteinExistence type="evidence at protein level"/>
<keyword id="KW-0002">3D-structure</keyword>
<keyword id="KW-0007">Acetylation</keyword>
<keyword id="KW-0021">Allosteric enzyme</keyword>
<keyword id="KW-1185">Reference proteome</keyword>
<keyword id="KW-0808">Transferase</keyword>
<keyword id="KW-0816">Tricarboxylic acid cycle</keyword>
<name>CISY2_MYCTU</name>
<reference key="1">
    <citation type="journal article" date="1998" name="Nature">
        <title>Deciphering the biology of Mycobacterium tuberculosis from the complete genome sequence.</title>
        <authorList>
            <person name="Cole S.T."/>
            <person name="Brosch R."/>
            <person name="Parkhill J."/>
            <person name="Garnier T."/>
            <person name="Churcher C.M."/>
            <person name="Harris D.E."/>
            <person name="Gordon S.V."/>
            <person name="Eiglmeier K."/>
            <person name="Gas S."/>
            <person name="Barry C.E. III"/>
            <person name="Tekaia F."/>
            <person name="Badcock K."/>
            <person name="Basham D."/>
            <person name="Brown D."/>
            <person name="Chillingworth T."/>
            <person name="Connor R."/>
            <person name="Davies R.M."/>
            <person name="Devlin K."/>
            <person name="Feltwell T."/>
            <person name="Gentles S."/>
            <person name="Hamlin N."/>
            <person name="Holroyd S."/>
            <person name="Hornsby T."/>
            <person name="Jagels K."/>
            <person name="Krogh A."/>
            <person name="McLean J."/>
            <person name="Moule S."/>
            <person name="Murphy L.D."/>
            <person name="Oliver S."/>
            <person name="Osborne J."/>
            <person name="Quail M.A."/>
            <person name="Rajandream M.A."/>
            <person name="Rogers J."/>
            <person name="Rutter S."/>
            <person name="Seeger K."/>
            <person name="Skelton S."/>
            <person name="Squares S."/>
            <person name="Squares R."/>
            <person name="Sulston J.E."/>
            <person name="Taylor K."/>
            <person name="Whitehead S."/>
            <person name="Barrell B.G."/>
        </authorList>
    </citation>
    <scope>NUCLEOTIDE SEQUENCE [LARGE SCALE GENOMIC DNA]</scope>
    <source>
        <strain>ATCC 25618 / H37Rv</strain>
    </source>
</reference>
<reference key="2">
    <citation type="journal article" date="2011" name="Mol. Cell. Proteomics">
        <title>Proteogenomic analysis of Mycobacterium tuberculosis by high resolution mass spectrometry.</title>
        <authorList>
            <person name="Kelkar D.S."/>
            <person name="Kumar D."/>
            <person name="Kumar P."/>
            <person name="Balakrishnan L."/>
            <person name="Muthusamy B."/>
            <person name="Yadav A.K."/>
            <person name="Shrivastava P."/>
            <person name="Marimuthu A."/>
            <person name="Anand S."/>
            <person name="Sundaram H."/>
            <person name="Kingsbury R."/>
            <person name="Harsha H.C."/>
            <person name="Nair B."/>
            <person name="Prasad T.S."/>
            <person name="Chauhan D.S."/>
            <person name="Katoch K."/>
            <person name="Katoch V.M."/>
            <person name="Kumar P."/>
            <person name="Chaerkady R."/>
            <person name="Ramachandran S."/>
            <person name="Dash D."/>
            <person name="Pandey A."/>
        </authorList>
    </citation>
    <scope>ACETYLATION [LARGE SCALE ANALYSIS] AT THR-2</scope>
    <scope>CLEAVAGE OF INITIATOR METHIONINE [LARGE SCALE ANALYSIS]</scope>
    <scope>IDENTIFICATION BY MASS SPECTROMETRY [LARGE SCALE ANALYSIS]</scope>
    <source>
        <strain>ATCC 25618 / H37Rv</strain>
    </source>
</reference>
<comment type="catalytic activity">
    <reaction evidence="2">
        <text>oxaloacetate + acetyl-CoA + H2O = citrate + CoA + H(+)</text>
        <dbReference type="Rhea" id="RHEA:16845"/>
        <dbReference type="ChEBI" id="CHEBI:15377"/>
        <dbReference type="ChEBI" id="CHEBI:15378"/>
        <dbReference type="ChEBI" id="CHEBI:16452"/>
        <dbReference type="ChEBI" id="CHEBI:16947"/>
        <dbReference type="ChEBI" id="CHEBI:57287"/>
        <dbReference type="ChEBI" id="CHEBI:57288"/>
        <dbReference type="EC" id="2.3.3.16"/>
    </reaction>
</comment>
<comment type="pathway">
    <text>Carbohydrate metabolism; tricarboxylic acid cycle; isocitrate from oxaloacetate: step 1/2.</text>
</comment>
<comment type="miscellaneous">
    <text evidence="1">Citrate synthase is found in nearly all cells capable of oxidative metabolism.</text>
</comment>
<comment type="similarity">
    <text evidence="3">Belongs to the citrate synthase family.</text>
</comment>
<evidence type="ECO:0000250" key="1"/>
<evidence type="ECO:0000255" key="2">
    <source>
        <dbReference type="PROSITE-ProRule" id="PRU10117"/>
    </source>
</evidence>
<evidence type="ECO:0000305" key="3"/>
<evidence type="ECO:0007744" key="4">
    <source>
    </source>
</evidence>
<evidence type="ECO:0007829" key="5">
    <source>
        <dbReference type="PDB" id="8GLB"/>
    </source>
</evidence>
<evidence type="ECO:0007829" key="6">
    <source>
        <dbReference type="PDB" id="8GM9"/>
    </source>
</evidence>
<evidence type="ECO:0007829" key="7">
    <source>
        <dbReference type="PDB" id="8GMI"/>
    </source>
</evidence>
<evidence type="ECO:0007829" key="8">
    <source>
        <dbReference type="PDB" id="8GMK"/>
    </source>
</evidence>
<evidence type="ECO:0007829" key="9">
    <source>
        <dbReference type="PDB" id="8S9D"/>
    </source>
</evidence>
<organism>
    <name type="scientific">Mycobacterium tuberculosis (strain ATCC 25618 / H37Rv)</name>
    <dbReference type="NCBI Taxonomy" id="83332"/>
    <lineage>
        <taxon>Bacteria</taxon>
        <taxon>Bacillati</taxon>
        <taxon>Actinomycetota</taxon>
        <taxon>Actinomycetes</taxon>
        <taxon>Mycobacteriales</taxon>
        <taxon>Mycobacteriaceae</taxon>
        <taxon>Mycobacterium</taxon>
        <taxon>Mycobacterium tuberculosis complex</taxon>
    </lineage>
</organism>
<gene>
    <name type="primary">citA</name>
    <name type="ordered locus">Rv0889c</name>
    <name type="ORF">MTCY31.17c</name>
</gene>
<feature type="initiator methionine" description="Removed" evidence="4">
    <location>
        <position position="1"/>
    </location>
</feature>
<feature type="chain" id="PRO_0000169949" description="Putative citrate synthase 2">
    <location>
        <begin position="2"/>
        <end position="373"/>
    </location>
</feature>
<feature type="active site" evidence="2">
    <location>
        <position position="250"/>
    </location>
</feature>
<feature type="active site" evidence="2">
    <location>
        <position position="303"/>
    </location>
</feature>
<feature type="modified residue" description="N-acetylthreonine" evidence="4">
    <location>
        <position position="2"/>
    </location>
</feature>
<feature type="helix" evidence="7">
    <location>
        <begin position="10"/>
        <end position="12"/>
    </location>
</feature>
<feature type="strand" evidence="8">
    <location>
        <begin position="16"/>
        <end position="26"/>
    </location>
</feature>
<feature type="turn" evidence="8">
    <location>
        <begin position="27"/>
        <end position="30"/>
    </location>
</feature>
<feature type="strand" evidence="8">
    <location>
        <begin position="31"/>
        <end position="34"/>
    </location>
</feature>
<feature type="helix" evidence="8">
    <location>
        <begin position="39"/>
        <end position="44"/>
    </location>
</feature>
<feature type="helix" evidence="8">
    <location>
        <begin position="49"/>
        <end position="58"/>
    </location>
</feature>
<feature type="strand" evidence="8">
    <location>
        <begin position="59"/>
        <end position="63"/>
    </location>
</feature>
<feature type="helix" evidence="8">
    <location>
        <begin position="80"/>
        <end position="89"/>
    </location>
</feature>
<feature type="helix" evidence="8">
    <location>
        <begin position="91"/>
        <end position="95"/>
    </location>
</feature>
<feature type="helix" evidence="8">
    <location>
        <begin position="100"/>
        <end position="102"/>
    </location>
</feature>
<feature type="helix" evidence="8">
    <location>
        <begin position="105"/>
        <end position="128"/>
    </location>
</feature>
<feature type="strand" evidence="7">
    <location>
        <begin position="130"/>
        <end position="132"/>
    </location>
</feature>
<feature type="helix" evidence="8">
    <location>
        <begin position="137"/>
        <end position="140"/>
    </location>
</feature>
<feature type="helix" evidence="8">
    <location>
        <begin position="146"/>
        <end position="155"/>
    </location>
</feature>
<feature type="helix" evidence="8">
    <location>
        <begin position="160"/>
        <end position="173"/>
    </location>
</feature>
<feature type="helix" evidence="8">
    <location>
        <begin position="180"/>
        <end position="190"/>
    </location>
</feature>
<feature type="helix" evidence="8">
    <location>
        <begin position="195"/>
        <end position="206"/>
    </location>
</feature>
<feature type="helix" evidence="9">
    <location>
        <begin position="209"/>
        <end position="211"/>
    </location>
</feature>
<feature type="helix" evidence="9">
    <location>
        <begin position="215"/>
        <end position="217"/>
    </location>
</feature>
<feature type="helix" evidence="8">
    <location>
        <begin position="219"/>
        <end position="228"/>
    </location>
</feature>
<feature type="helix" evidence="8">
    <location>
        <begin position="231"/>
        <end position="240"/>
    </location>
</feature>
<feature type="strand" evidence="8">
    <location>
        <begin position="248"/>
        <end position="250"/>
    </location>
</feature>
<feature type="strand" evidence="8">
    <location>
        <begin position="252"/>
        <end position="256"/>
    </location>
</feature>
<feature type="helix" evidence="8">
    <location>
        <begin position="258"/>
        <end position="270"/>
    </location>
</feature>
<feature type="helix" evidence="8">
    <location>
        <begin position="275"/>
        <end position="292"/>
    </location>
</feature>
<feature type="strand" evidence="6">
    <location>
        <begin position="294"/>
        <end position="296"/>
    </location>
</feature>
<feature type="strand" evidence="5">
    <location>
        <begin position="298"/>
        <end position="300"/>
    </location>
</feature>
<feature type="helix" evidence="8">
    <location>
        <begin position="302"/>
        <end position="312"/>
    </location>
</feature>
<feature type="helix" evidence="8">
    <location>
        <begin position="317"/>
        <end position="319"/>
    </location>
</feature>
<feature type="helix" evidence="8">
    <location>
        <begin position="320"/>
        <end position="342"/>
    </location>
</feature>
<feature type="strand" evidence="8">
    <location>
        <begin position="349"/>
        <end position="352"/>
    </location>
</feature>
<feature type="helix" evidence="8">
    <location>
        <begin position="360"/>
        <end position="362"/>
    </location>
</feature>
<feature type="turn" evidence="8">
    <location>
        <begin position="364"/>
        <end position="368"/>
    </location>
</feature>
<accession>P9WPD3</accession>
<accession>L0T808</accession>
<accession>P63777</accession>
<accession>Q10529</accession>
<protein>
    <recommendedName>
        <fullName>Putative citrate synthase 2</fullName>
        <ecNumber>2.3.3.16</ecNumber>
    </recommendedName>
</protein>